<feature type="chain" id="PRO_1000190632" description="Translation initiation factor IF-2">
    <location>
        <begin position="1"/>
        <end position="880"/>
    </location>
</feature>
<feature type="domain" description="tr-type G">
    <location>
        <begin position="380"/>
        <end position="549"/>
    </location>
</feature>
<feature type="region of interest" description="Disordered" evidence="3">
    <location>
        <begin position="180"/>
        <end position="289"/>
    </location>
</feature>
<feature type="region of interest" description="G1" evidence="1">
    <location>
        <begin position="389"/>
        <end position="396"/>
    </location>
</feature>
<feature type="region of interest" description="G2" evidence="1">
    <location>
        <begin position="414"/>
        <end position="418"/>
    </location>
</feature>
<feature type="region of interest" description="G3" evidence="1">
    <location>
        <begin position="435"/>
        <end position="438"/>
    </location>
</feature>
<feature type="region of interest" description="G4" evidence="1">
    <location>
        <begin position="489"/>
        <end position="492"/>
    </location>
</feature>
<feature type="region of interest" description="G5" evidence="1">
    <location>
        <begin position="525"/>
        <end position="527"/>
    </location>
</feature>
<feature type="compositionally biased region" description="Basic and acidic residues" evidence="3">
    <location>
        <begin position="180"/>
        <end position="194"/>
    </location>
</feature>
<feature type="compositionally biased region" description="Basic and acidic residues" evidence="3">
    <location>
        <begin position="202"/>
        <end position="228"/>
    </location>
</feature>
<feature type="compositionally biased region" description="Basic residues" evidence="3">
    <location>
        <begin position="249"/>
        <end position="262"/>
    </location>
</feature>
<feature type="binding site" evidence="2">
    <location>
        <begin position="389"/>
        <end position="396"/>
    </location>
    <ligand>
        <name>GTP</name>
        <dbReference type="ChEBI" id="CHEBI:37565"/>
    </ligand>
</feature>
<feature type="binding site" evidence="2">
    <location>
        <begin position="435"/>
        <end position="439"/>
    </location>
    <ligand>
        <name>GTP</name>
        <dbReference type="ChEBI" id="CHEBI:37565"/>
    </ligand>
</feature>
<feature type="binding site" evidence="2">
    <location>
        <begin position="489"/>
        <end position="492"/>
    </location>
    <ligand>
        <name>GTP</name>
        <dbReference type="ChEBI" id="CHEBI:37565"/>
    </ligand>
</feature>
<name>IF2_SHEB2</name>
<comment type="function">
    <text evidence="2">One of the essential components for the initiation of protein synthesis. Protects formylmethionyl-tRNA from spontaneous hydrolysis and promotes its binding to the 30S ribosomal subunits. Also involved in the hydrolysis of GTP during the formation of the 70S ribosomal complex.</text>
</comment>
<comment type="subcellular location">
    <subcellularLocation>
        <location evidence="2">Cytoplasm</location>
    </subcellularLocation>
</comment>
<comment type="similarity">
    <text evidence="2">Belongs to the TRAFAC class translation factor GTPase superfamily. Classic translation factor GTPase family. IF-2 subfamily.</text>
</comment>
<proteinExistence type="inferred from homology"/>
<evidence type="ECO:0000250" key="1"/>
<evidence type="ECO:0000255" key="2">
    <source>
        <dbReference type="HAMAP-Rule" id="MF_00100"/>
    </source>
</evidence>
<evidence type="ECO:0000256" key="3">
    <source>
        <dbReference type="SAM" id="MobiDB-lite"/>
    </source>
</evidence>
<protein>
    <recommendedName>
        <fullName evidence="2">Translation initiation factor IF-2</fullName>
    </recommendedName>
</protein>
<keyword id="KW-0963">Cytoplasm</keyword>
<keyword id="KW-0342">GTP-binding</keyword>
<keyword id="KW-0396">Initiation factor</keyword>
<keyword id="KW-0547">Nucleotide-binding</keyword>
<keyword id="KW-0648">Protein biosynthesis</keyword>
<organism>
    <name type="scientific">Shewanella baltica (strain OS223)</name>
    <dbReference type="NCBI Taxonomy" id="407976"/>
    <lineage>
        <taxon>Bacteria</taxon>
        <taxon>Pseudomonadati</taxon>
        <taxon>Pseudomonadota</taxon>
        <taxon>Gammaproteobacteria</taxon>
        <taxon>Alteromonadales</taxon>
        <taxon>Shewanellaceae</taxon>
        <taxon>Shewanella</taxon>
    </lineage>
</organism>
<reference key="1">
    <citation type="submission" date="2008-12" db="EMBL/GenBank/DDBJ databases">
        <title>Complete sequence of chromosome of Shewanella baltica OS223.</title>
        <authorList>
            <consortium name="US DOE Joint Genome Institute"/>
            <person name="Lucas S."/>
            <person name="Copeland A."/>
            <person name="Lapidus A."/>
            <person name="Glavina del Rio T."/>
            <person name="Dalin E."/>
            <person name="Tice H."/>
            <person name="Bruce D."/>
            <person name="Goodwin L."/>
            <person name="Pitluck S."/>
            <person name="Chertkov O."/>
            <person name="Meincke L."/>
            <person name="Brettin T."/>
            <person name="Detter J.C."/>
            <person name="Han C."/>
            <person name="Kuske C.R."/>
            <person name="Larimer F."/>
            <person name="Land M."/>
            <person name="Hauser L."/>
            <person name="Kyrpides N."/>
            <person name="Ovchinnikova G."/>
            <person name="Brettar I."/>
            <person name="Rodrigues J."/>
            <person name="Konstantinidis K."/>
            <person name="Tiedje J."/>
        </authorList>
    </citation>
    <scope>NUCLEOTIDE SEQUENCE [LARGE SCALE GENOMIC DNA]</scope>
    <source>
        <strain>OS223</strain>
    </source>
</reference>
<dbReference type="EMBL" id="CP001252">
    <property type="protein sequence ID" value="ACK45643.1"/>
    <property type="molecule type" value="Genomic_DNA"/>
</dbReference>
<dbReference type="RefSeq" id="WP_006082716.1">
    <property type="nucleotide sequence ID" value="NC_011663.1"/>
</dbReference>
<dbReference type="SMR" id="B8E6N2"/>
<dbReference type="GeneID" id="11774928"/>
<dbReference type="KEGG" id="sbp:Sbal223_1128"/>
<dbReference type="HOGENOM" id="CLU_006301_6_3_6"/>
<dbReference type="Proteomes" id="UP000002507">
    <property type="component" value="Chromosome"/>
</dbReference>
<dbReference type="GO" id="GO:0005829">
    <property type="term" value="C:cytosol"/>
    <property type="evidence" value="ECO:0007669"/>
    <property type="project" value="TreeGrafter"/>
</dbReference>
<dbReference type="GO" id="GO:0005525">
    <property type="term" value="F:GTP binding"/>
    <property type="evidence" value="ECO:0007669"/>
    <property type="project" value="UniProtKB-KW"/>
</dbReference>
<dbReference type="GO" id="GO:0003924">
    <property type="term" value="F:GTPase activity"/>
    <property type="evidence" value="ECO:0007669"/>
    <property type="project" value="UniProtKB-UniRule"/>
</dbReference>
<dbReference type="GO" id="GO:0097216">
    <property type="term" value="F:guanosine tetraphosphate binding"/>
    <property type="evidence" value="ECO:0007669"/>
    <property type="project" value="UniProtKB-ARBA"/>
</dbReference>
<dbReference type="GO" id="GO:0003743">
    <property type="term" value="F:translation initiation factor activity"/>
    <property type="evidence" value="ECO:0007669"/>
    <property type="project" value="UniProtKB-UniRule"/>
</dbReference>
<dbReference type="CDD" id="cd01887">
    <property type="entry name" value="IF2_eIF5B"/>
    <property type="match status" value="1"/>
</dbReference>
<dbReference type="CDD" id="cd03702">
    <property type="entry name" value="IF2_mtIF2_II"/>
    <property type="match status" value="1"/>
</dbReference>
<dbReference type="CDD" id="cd03692">
    <property type="entry name" value="mtIF2_IVc"/>
    <property type="match status" value="1"/>
</dbReference>
<dbReference type="FunFam" id="2.40.30.10:FF:000007">
    <property type="entry name" value="Translation initiation factor IF-2"/>
    <property type="match status" value="1"/>
</dbReference>
<dbReference type="FunFam" id="2.40.30.10:FF:000008">
    <property type="entry name" value="Translation initiation factor IF-2"/>
    <property type="match status" value="1"/>
</dbReference>
<dbReference type="FunFam" id="3.40.50.10050:FF:000001">
    <property type="entry name" value="Translation initiation factor IF-2"/>
    <property type="match status" value="1"/>
</dbReference>
<dbReference type="FunFam" id="3.40.50.300:FF:000019">
    <property type="entry name" value="Translation initiation factor IF-2"/>
    <property type="match status" value="1"/>
</dbReference>
<dbReference type="Gene3D" id="3.40.50.300">
    <property type="entry name" value="P-loop containing nucleotide triphosphate hydrolases"/>
    <property type="match status" value="1"/>
</dbReference>
<dbReference type="Gene3D" id="3.30.56.50">
    <property type="entry name" value="Putative DNA-binding domain, N-terminal subdomain of bacterial translation initiation factor IF2"/>
    <property type="match status" value="1"/>
</dbReference>
<dbReference type="Gene3D" id="2.40.30.10">
    <property type="entry name" value="Translation factors"/>
    <property type="match status" value="2"/>
</dbReference>
<dbReference type="Gene3D" id="3.40.50.10050">
    <property type="entry name" value="Translation initiation factor IF- 2, domain 3"/>
    <property type="match status" value="1"/>
</dbReference>
<dbReference type="HAMAP" id="MF_00100_B">
    <property type="entry name" value="IF_2_B"/>
    <property type="match status" value="1"/>
</dbReference>
<dbReference type="InterPro" id="IPR009061">
    <property type="entry name" value="DNA-bd_dom_put_sf"/>
</dbReference>
<dbReference type="InterPro" id="IPR053905">
    <property type="entry name" value="EF-G-like_DII"/>
</dbReference>
<dbReference type="InterPro" id="IPR004161">
    <property type="entry name" value="EFTu-like_2"/>
</dbReference>
<dbReference type="InterPro" id="IPR013575">
    <property type="entry name" value="IF2_assoc_dom_bac"/>
</dbReference>
<dbReference type="InterPro" id="IPR044145">
    <property type="entry name" value="IF2_II"/>
</dbReference>
<dbReference type="InterPro" id="IPR006847">
    <property type="entry name" value="IF2_N"/>
</dbReference>
<dbReference type="InterPro" id="IPR027417">
    <property type="entry name" value="P-loop_NTPase"/>
</dbReference>
<dbReference type="InterPro" id="IPR005225">
    <property type="entry name" value="Small_GTP-bd"/>
</dbReference>
<dbReference type="InterPro" id="IPR000795">
    <property type="entry name" value="T_Tr_GTP-bd_dom"/>
</dbReference>
<dbReference type="InterPro" id="IPR000178">
    <property type="entry name" value="TF_IF2_bacterial-like"/>
</dbReference>
<dbReference type="InterPro" id="IPR015760">
    <property type="entry name" value="TIF_IF2"/>
</dbReference>
<dbReference type="InterPro" id="IPR023115">
    <property type="entry name" value="TIF_IF2_dom3"/>
</dbReference>
<dbReference type="InterPro" id="IPR036925">
    <property type="entry name" value="TIF_IF2_dom3_sf"/>
</dbReference>
<dbReference type="InterPro" id="IPR009000">
    <property type="entry name" value="Transl_B-barrel_sf"/>
</dbReference>
<dbReference type="NCBIfam" id="TIGR00487">
    <property type="entry name" value="IF-2"/>
    <property type="match status" value="1"/>
</dbReference>
<dbReference type="NCBIfam" id="TIGR00231">
    <property type="entry name" value="small_GTP"/>
    <property type="match status" value="1"/>
</dbReference>
<dbReference type="PANTHER" id="PTHR43381:SF5">
    <property type="entry name" value="TR-TYPE G DOMAIN-CONTAINING PROTEIN"/>
    <property type="match status" value="1"/>
</dbReference>
<dbReference type="PANTHER" id="PTHR43381">
    <property type="entry name" value="TRANSLATION INITIATION FACTOR IF-2-RELATED"/>
    <property type="match status" value="1"/>
</dbReference>
<dbReference type="Pfam" id="PF22042">
    <property type="entry name" value="EF-G_D2"/>
    <property type="match status" value="1"/>
</dbReference>
<dbReference type="Pfam" id="PF00009">
    <property type="entry name" value="GTP_EFTU"/>
    <property type="match status" value="1"/>
</dbReference>
<dbReference type="Pfam" id="PF03144">
    <property type="entry name" value="GTP_EFTU_D2"/>
    <property type="match status" value="1"/>
</dbReference>
<dbReference type="Pfam" id="PF11987">
    <property type="entry name" value="IF-2"/>
    <property type="match status" value="1"/>
</dbReference>
<dbReference type="Pfam" id="PF08364">
    <property type="entry name" value="IF2_assoc"/>
    <property type="match status" value="1"/>
</dbReference>
<dbReference type="Pfam" id="PF04760">
    <property type="entry name" value="IF2_N"/>
    <property type="match status" value="2"/>
</dbReference>
<dbReference type="SUPFAM" id="SSF52156">
    <property type="entry name" value="Initiation factor IF2/eIF5b, domain 3"/>
    <property type="match status" value="1"/>
</dbReference>
<dbReference type="SUPFAM" id="SSF52540">
    <property type="entry name" value="P-loop containing nucleoside triphosphate hydrolases"/>
    <property type="match status" value="1"/>
</dbReference>
<dbReference type="SUPFAM" id="SSF46955">
    <property type="entry name" value="Putative DNA-binding domain"/>
    <property type="match status" value="1"/>
</dbReference>
<dbReference type="SUPFAM" id="SSF50447">
    <property type="entry name" value="Translation proteins"/>
    <property type="match status" value="2"/>
</dbReference>
<dbReference type="PROSITE" id="PS51722">
    <property type="entry name" value="G_TR_2"/>
    <property type="match status" value="1"/>
</dbReference>
<dbReference type="PROSITE" id="PS01176">
    <property type="entry name" value="IF2"/>
    <property type="match status" value="1"/>
</dbReference>
<sequence length="880" mass="95543">MADTTVEKLATEVGKSVERLIEQFSQAGIKKGQADNVTEAEKQQLLDYLKKQHGGENAPTKMTLQRKTVSTLSVAGNGGQSKDVKVEVRKTRTFVKRDANEATLKAEEEAKVEAEALAKAKAEAEAAAAVKAKAEADAKAKADAEAKAKAKAAAEVKVVKDMSPEAEAARLEAERLKAAQEAATKRKQDEEAAKAAETARLLAEEHSKRWAEEERQRLEAEKNGDHHITTSKVARAAEDTSDLDEEKRGRRARNKSNAKKRGGKDARDGREKHMRNRSTAPESMAHGFNKPVAAVSRDVRIGETVTVSELAHLMAVKATEIIKQMMKMGSMVTINQVLDQETAQMVAEEMGHKVVLIRENELEHQVLKDRDDEDGIKQESRAPVVTIMGHVDHGKTSLLDYIRRAKVAAGEAGGITQHIGAYHVETENGMITFLDTPGHAAFTAMRARGAKATDIVVLVVAADDGVMPQTIEAIQHAKAGNVPLIVAVNKMDKPEADIDRVKSELSQHGVMSEDWGGDNMFAFVSAKTGEGVDELLEGILLQAEVLELKAVRDGMAAGVVIESQLDKGRGPVATILVQEGTLRQGDIVLCGLEYGKIRAMKDENGRSITEAGPSIPVEILGLSGVPSAGDEATVVRDERKAREVALYRQGKFRDVKLARQQKSKLENMFANMTEGEVKELNIVLKADVQGSLEAITDSLTGLSTDEVKVNIIARGVGALTETDATLAAASNAILVGFNVRADAQARKTIDSESVDLRYYSVIYNLIDEVRAAMTGMLSPEFKQQIIGLAEVRDVFKSPKLGAIAGCMVTEGTIKRSAPIRVLRDNVVIYEGELESLRRFKDDVAEVRNGMECGIGVKNYNDVRVGDQIEVFETVEIARTL</sequence>
<gene>
    <name evidence="2" type="primary">infB</name>
    <name type="ordered locus">Sbal223_1128</name>
</gene>
<accession>B8E6N2</accession>